<proteinExistence type="inferred from homology"/>
<keyword id="KW-0067">ATP-binding</keyword>
<keyword id="KW-0436">Ligase</keyword>
<keyword id="KW-0460">Magnesium</keyword>
<keyword id="KW-0464">Manganese</keyword>
<keyword id="KW-0479">Metal-binding</keyword>
<keyword id="KW-0547">Nucleotide-binding</keyword>
<keyword id="KW-0658">Purine biosynthesis</keyword>
<keyword id="KW-1185">Reference proteome</keyword>
<reference key="1">
    <citation type="journal article" date="2011" name="Stand. Genomic Sci.">
        <title>Complete genome sequence of Allochromatium vinosum DSM 180(T).</title>
        <authorList>
            <person name="Weissgerber T."/>
            <person name="Zigann R."/>
            <person name="Bruce D."/>
            <person name="Chang Y.J."/>
            <person name="Detter J.C."/>
            <person name="Han C."/>
            <person name="Hauser L."/>
            <person name="Jeffries C.D."/>
            <person name="Land M."/>
            <person name="Munk A.C."/>
            <person name="Tapia R."/>
            <person name="Dahl C."/>
        </authorList>
    </citation>
    <scope>NUCLEOTIDE SEQUENCE [LARGE SCALE GENOMIC DNA]</scope>
    <source>
        <strain>ATCC 17899 / DSM 180 / NBRC 103801 / NCIMB 10441 / D</strain>
    </source>
</reference>
<reference key="2">
    <citation type="submission" date="1996-04" db="EMBL/GenBank/DDBJ databases">
        <authorList>
            <person name="Chen Y.L."/>
            <person name="Knaff D.B."/>
        </authorList>
    </citation>
    <scope>NUCLEOTIDE SEQUENCE [GENOMIC DNA] OF 1-189</scope>
</reference>
<organism>
    <name type="scientific">Allochromatium vinosum (strain ATCC 17899 / DSM 180 / NBRC 103801 / NCIMB 10441 / D)</name>
    <name type="common">Chromatium vinosum</name>
    <dbReference type="NCBI Taxonomy" id="572477"/>
    <lineage>
        <taxon>Bacteria</taxon>
        <taxon>Pseudomonadati</taxon>
        <taxon>Pseudomonadota</taxon>
        <taxon>Gammaproteobacteria</taxon>
        <taxon>Chromatiales</taxon>
        <taxon>Chromatiaceae</taxon>
        <taxon>Allochromatium</taxon>
    </lineage>
</organism>
<comment type="catalytic activity">
    <reaction>
        <text>5-phospho-beta-D-ribosylamine + glycine + ATP = N(1)-(5-phospho-beta-D-ribosyl)glycinamide + ADP + phosphate + H(+)</text>
        <dbReference type="Rhea" id="RHEA:17453"/>
        <dbReference type="ChEBI" id="CHEBI:15378"/>
        <dbReference type="ChEBI" id="CHEBI:30616"/>
        <dbReference type="ChEBI" id="CHEBI:43474"/>
        <dbReference type="ChEBI" id="CHEBI:57305"/>
        <dbReference type="ChEBI" id="CHEBI:58681"/>
        <dbReference type="ChEBI" id="CHEBI:143788"/>
        <dbReference type="ChEBI" id="CHEBI:456216"/>
        <dbReference type="EC" id="6.3.4.13"/>
    </reaction>
</comment>
<comment type="cofactor">
    <cofactor evidence="1">
        <name>Mg(2+)</name>
        <dbReference type="ChEBI" id="CHEBI:18420"/>
    </cofactor>
    <cofactor evidence="1">
        <name>Mn(2+)</name>
        <dbReference type="ChEBI" id="CHEBI:29035"/>
    </cofactor>
    <text evidence="1">Binds 1 Mg(2+) or Mn(2+) ion per subunit.</text>
</comment>
<comment type="pathway">
    <text>Purine metabolism; IMP biosynthesis via de novo pathway; N(1)-(5-phospho-D-ribosyl)glycinamide from 5-phospho-alpha-D-ribose 1-diphosphate: step 2/2.</text>
</comment>
<comment type="similarity">
    <text evidence="3">Belongs to the GARS family.</text>
</comment>
<accession>Q46482</accession>
<accession>D3RQG2</accession>
<name>PUR2_ALLVD</name>
<protein>
    <recommendedName>
        <fullName>Phosphoribosylamine--glycine ligase</fullName>
        <ecNumber>6.3.4.13</ecNumber>
    </recommendedName>
    <alternativeName>
        <fullName>GARS</fullName>
    </alternativeName>
    <alternativeName>
        <fullName>Glycinamide ribonucleotide synthetase</fullName>
    </alternativeName>
    <alternativeName>
        <fullName>Phosphoribosylglycinamide synthetase</fullName>
    </alternativeName>
</protein>
<feature type="chain" id="PRO_0000151443" description="Phosphoribosylamine--glycine ligase">
    <location>
        <begin position="1"/>
        <end position="428"/>
    </location>
</feature>
<feature type="domain" description="ATP-grasp">
    <location>
        <begin position="109"/>
        <end position="316"/>
    </location>
</feature>
<feature type="region of interest" description="Disordered" evidence="2">
    <location>
        <begin position="211"/>
        <end position="235"/>
    </location>
</feature>
<feature type="compositionally biased region" description="Basic and acidic residues" evidence="2">
    <location>
        <begin position="213"/>
        <end position="223"/>
    </location>
</feature>
<feature type="binding site" evidence="1">
    <location>
        <begin position="135"/>
        <end position="196"/>
    </location>
    <ligand>
        <name>ATP</name>
        <dbReference type="ChEBI" id="CHEBI:30616"/>
    </ligand>
</feature>
<feature type="binding site" evidence="1">
    <location>
        <position position="286"/>
    </location>
    <ligand>
        <name>Mg(2+)</name>
        <dbReference type="ChEBI" id="CHEBI:18420"/>
    </ligand>
</feature>
<feature type="binding site" evidence="1">
    <location>
        <position position="288"/>
    </location>
    <ligand>
        <name>Mg(2+)</name>
        <dbReference type="ChEBI" id="CHEBI:18420"/>
    </ligand>
</feature>
<feature type="sequence conflict" description="In Ref. 2; AAB02980." evidence="3" ref="2">
    <original>RQA</original>
    <variation>ASG</variation>
    <location>
        <begin position="95"/>
        <end position="97"/>
    </location>
</feature>
<feature type="sequence conflict" description="In Ref. 2; AAB02980." evidence="3" ref="2">
    <original>DD</original>
    <variation>MI</variation>
    <location>
        <begin position="159"/>
        <end position="160"/>
    </location>
</feature>
<feature type="sequence conflict" description="In Ref. 2; AAB02980." evidence="3" ref="2">
    <original>EAA</original>
    <variation>GGG</variation>
    <location>
        <begin position="165"/>
        <end position="167"/>
    </location>
</feature>
<feature type="sequence conflict" description="In Ref. 2; AAB02980." evidence="3" ref="2">
    <original>GGRFGRAGAR</original>
    <variation>ADAFGPGGGG</variation>
    <location>
        <begin position="174"/>
        <end position="183"/>
    </location>
</feature>
<evidence type="ECO:0000250" key="1"/>
<evidence type="ECO:0000256" key="2">
    <source>
        <dbReference type="SAM" id="MobiDB-lite"/>
    </source>
</evidence>
<evidence type="ECO:0000305" key="3"/>
<sequence>MKILIVGSGGREHALAWKAAQSPQVEQVFVAPGNGGTASEPGVENVAIAADDIAGLVEFARRESIGLTIVGPEAPLVLGLVDAFAEAGLPCFGPRQASAQLEGSKAFAKDFLHRHGIPTAAYGVFTELEPALAYLRQVGAPVVVKADGLAAGKGVILADDLATAEAAVHDMLGGGRFGRAGARVVIEEFLTGEEASFIAMVDGRHILPLASSQDHKARDDGDRGPNTGGMGAYSPAPIVTPEIHDRIMREVMEPTVAGLAAEGLPYLGFLYAGLMIGADGTPKVLEFNCRLGDPETQPLLMRLQSDLVELCLAALDGRLDQVTADWDARPALGVVMAAGGYPDDYETGHVISGLDAVPSSEAKVFQAGTRCEGDAILTNGGRVLCVTALGANVAEAQHLAYQAVDRIQWTDAFCRRDIGHRAIARERS</sequence>
<dbReference type="EC" id="6.3.4.13"/>
<dbReference type="EMBL" id="CP001896">
    <property type="protein sequence ID" value="ADC61767.1"/>
    <property type="molecule type" value="Genomic_DNA"/>
</dbReference>
<dbReference type="EMBL" id="L76417">
    <property type="protein sequence ID" value="AAB02980.1"/>
    <property type="molecule type" value="Genomic_DNA"/>
</dbReference>
<dbReference type="RefSeq" id="WP_012970043.1">
    <property type="nucleotide sequence ID" value="NC_013851.1"/>
</dbReference>
<dbReference type="SMR" id="Q46482"/>
<dbReference type="STRING" id="572477.Alvin_0820"/>
<dbReference type="KEGG" id="alv:Alvin_0820"/>
<dbReference type="eggNOG" id="COG0151">
    <property type="taxonomic scope" value="Bacteria"/>
</dbReference>
<dbReference type="HOGENOM" id="CLU_027420_3_1_6"/>
<dbReference type="OrthoDB" id="9807240at2"/>
<dbReference type="UniPathway" id="UPA00074">
    <property type="reaction ID" value="UER00125"/>
</dbReference>
<dbReference type="Proteomes" id="UP000001441">
    <property type="component" value="Chromosome"/>
</dbReference>
<dbReference type="GO" id="GO:0005524">
    <property type="term" value="F:ATP binding"/>
    <property type="evidence" value="ECO:0007669"/>
    <property type="project" value="UniProtKB-KW"/>
</dbReference>
<dbReference type="GO" id="GO:0046872">
    <property type="term" value="F:metal ion binding"/>
    <property type="evidence" value="ECO:0007669"/>
    <property type="project" value="UniProtKB-KW"/>
</dbReference>
<dbReference type="GO" id="GO:0004637">
    <property type="term" value="F:phosphoribosylamine-glycine ligase activity"/>
    <property type="evidence" value="ECO:0007669"/>
    <property type="project" value="UniProtKB-UniRule"/>
</dbReference>
<dbReference type="GO" id="GO:0006189">
    <property type="term" value="P:'de novo' IMP biosynthetic process"/>
    <property type="evidence" value="ECO:0007669"/>
    <property type="project" value="UniProtKB-UniRule"/>
</dbReference>
<dbReference type="GO" id="GO:0009113">
    <property type="term" value="P:purine nucleobase biosynthetic process"/>
    <property type="evidence" value="ECO:0007669"/>
    <property type="project" value="InterPro"/>
</dbReference>
<dbReference type="FunFam" id="3.30.470.20:FF:000031">
    <property type="entry name" value="Phosphoribosylamine--glycine ligase"/>
    <property type="match status" value="1"/>
</dbReference>
<dbReference type="FunFam" id="3.40.50.20:FF:000006">
    <property type="entry name" value="Phosphoribosylamine--glycine ligase, chloroplastic"/>
    <property type="match status" value="1"/>
</dbReference>
<dbReference type="FunFam" id="3.30.1490.20:FF:000006">
    <property type="entry name" value="phosphoribosylamine--glycine ligase, chloroplastic-like"/>
    <property type="match status" value="1"/>
</dbReference>
<dbReference type="FunFam" id="3.90.600.10:FF:000001">
    <property type="entry name" value="Trifunctional purine biosynthetic protein adenosine-3"/>
    <property type="match status" value="1"/>
</dbReference>
<dbReference type="Gene3D" id="3.40.50.20">
    <property type="match status" value="1"/>
</dbReference>
<dbReference type="Gene3D" id="3.30.1490.20">
    <property type="entry name" value="ATP-grasp fold, A domain"/>
    <property type="match status" value="1"/>
</dbReference>
<dbReference type="Gene3D" id="3.30.470.20">
    <property type="entry name" value="ATP-grasp fold, B domain"/>
    <property type="match status" value="1"/>
</dbReference>
<dbReference type="Gene3D" id="3.90.600.10">
    <property type="entry name" value="Phosphoribosylglycinamide synthetase, C-terminal domain"/>
    <property type="match status" value="1"/>
</dbReference>
<dbReference type="HAMAP" id="MF_00138">
    <property type="entry name" value="GARS"/>
    <property type="match status" value="1"/>
</dbReference>
<dbReference type="InterPro" id="IPR011761">
    <property type="entry name" value="ATP-grasp"/>
</dbReference>
<dbReference type="InterPro" id="IPR013815">
    <property type="entry name" value="ATP_grasp_subdomain_1"/>
</dbReference>
<dbReference type="InterPro" id="IPR016185">
    <property type="entry name" value="PreATP-grasp_dom_sf"/>
</dbReference>
<dbReference type="InterPro" id="IPR020561">
    <property type="entry name" value="PRibGlycinamid_synth_ATP-grasp"/>
</dbReference>
<dbReference type="InterPro" id="IPR000115">
    <property type="entry name" value="PRibGlycinamide_synth"/>
</dbReference>
<dbReference type="InterPro" id="IPR020560">
    <property type="entry name" value="PRibGlycinamide_synth_C-dom"/>
</dbReference>
<dbReference type="InterPro" id="IPR037123">
    <property type="entry name" value="PRibGlycinamide_synth_C_sf"/>
</dbReference>
<dbReference type="InterPro" id="IPR020559">
    <property type="entry name" value="PRibGlycinamide_synth_CS"/>
</dbReference>
<dbReference type="InterPro" id="IPR020562">
    <property type="entry name" value="PRibGlycinamide_synth_N"/>
</dbReference>
<dbReference type="InterPro" id="IPR011054">
    <property type="entry name" value="Rudment_hybrid_motif"/>
</dbReference>
<dbReference type="NCBIfam" id="TIGR00877">
    <property type="entry name" value="purD"/>
    <property type="match status" value="1"/>
</dbReference>
<dbReference type="PANTHER" id="PTHR43472">
    <property type="entry name" value="PHOSPHORIBOSYLAMINE--GLYCINE LIGASE"/>
    <property type="match status" value="1"/>
</dbReference>
<dbReference type="PANTHER" id="PTHR43472:SF1">
    <property type="entry name" value="PHOSPHORIBOSYLAMINE--GLYCINE LIGASE, CHLOROPLASTIC"/>
    <property type="match status" value="1"/>
</dbReference>
<dbReference type="Pfam" id="PF01071">
    <property type="entry name" value="GARS_A"/>
    <property type="match status" value="1"/>
</dbReference>
<dbReference type="Pfam" id="PF02843">
    <property type="entry name" value="GARS_C"/>
    <property type="match status" value="1"/>
</dbReference>
<dbReference type="Pfam" id="PF02844">
    <property type="entry name" value="GARS_N"/>
    <property type="match status" value="1"/>
</dbReference>
<dbReference type="SMART" id="SM01209">
    <property type="entry name" value="GARS_A"/>
    <property type="match status" value="1"/>
</dbReference>
<dbReference type="SMART" id="SM01210">
    <property type="entry name" value="GARS_C"/>
    <property type="match status" value="1"/>
</dbReference>
<dbReference type="SUPFAM" id="SSF56059">
    <property type="entry name" value="Glutathione synthetase ATP-binding domain-like"/>
    <property type="match status" value="1"/>
</dbReference>
<dbReference type="SUPFAM" id="SSF52440">
    <property type="entry name" value="PreATP-grasp domain"/>
    <property type="match status" value="1"/>
</dbReference>
<dbReference type="SUPFAM" id="SSF51246">
    <property type="entry name" value="Rudiment single hybrid motif"/>
    <property type="match status" value="1"/>
</dbReference>
<dbReference type="PROSITE" id="PS50975">
    <property type="entry name" value="ATP_GRASP"/>
    <property type="match status" value="1"/>
</dbReference>
<dbReference type="PROSITE" id="PS00184">
    <property type="entry name" value="GARS"/>
    <property type="match status" value="1"/>
</dbReference>
<gene>
    <name type="primary">purD</name>
    <name type="ordered locus">Alvin_0820</name>
</gene>